<comment type="catalytic activity">
    <reaction evidence="1">
        <text>thiosulfate + hydrogen cyanide = thiocyanate + sulfite + 2 H(+)</text>
        <dbReference type="Rhea" id="RHEA:16881"/>
        <dbReference type="ChEBI" id="CHEBI:15378"/>
        <dbReference type="ChEBI" id="CHEBI:17359"/>
        <dbReference type="ChEBI" id="CHEBI:18022"/>
        <dbReference type="ChEBI" id="CHEBI:18407"/>
        <dbReference type="ChEBI" id="CHEBI:33542"/>
        <dbReference type="EC" id="2.8.1.1"/>
    </reaction>
</comment>
<comment type="induction">
    <text evidence="3">Expression increased by knockdown of mpst-1.</text>
</comment>
<comment type="domain">
    <text evidence="1">Contains two rhodanese domains with different primary structures but with near identical secondary structure conformations suggesting a common evolutionary origin. Only the C-terminal rhodanese domain contains the catalytic cysteine residue.</text>
</comment>
<protein>
    <recommendedName>
        <fullName>Putative thiosulfate sulfurtransferase mpst-4</fullName>
        <ecNumber evidence="1">2.8.1.1</ecNumber>
    </recommendedName>
    <alternativeName>
        <fullName evidence="4">Mercaptopyruvate sulfurtransferase homolog 4</fullName>
    </alternativeName>
</protein>
<evidence type="ECO:0000250" key="1">
    <source>
        <dbReference type="UniProtKB" id="P00586"/>
    </source>
</evidence>
<evidence type="ECO:0000255" key="2">
    <source>
        <dbReference type="PROSITE-ProRule" id="PRU00173"/>
    </source>
</evidence>
<evidence type="ECO:0000269" key="3">
    <source>
    </source>
</evidence>
<evidence type="ECO:0000312" key="4">
    <source>
        <dbReference type="WormBase" id="F11G11.9"/>
    </source>
</evidence>
<organism>
    <name type="scientific">Caenorhabditis elegans</name>
    <dbReference type="NCBI Taxonomy" id="6239"/>
    <lineage>
        <taxon>Eukaryota</taxon>
        <taxon>Metazoa</taxon>
        <taxon>Ecdysozoa</taxon>
        <taxon>Nematoda</taxon>
        <taxon>Chromadorea</taxon>
        <taxon>Rhabditida</taxon>
        <taxon>Rhabditina</taxon>
        <taxon>Rhabditomorpha</taxon>
        <taxon>Rhabditoidea</taxon>
        <taxon>Rhabditidae</taxon>
        <taxon>Peloderinae</taxon>
        <taxon>Caenorhabditis</taxon>
    </lineage>
</organism>
<reference key="1">
    <citation type="journal article" date="1998" name="Science">
        <title>Genome sequence of the nematode C. elegans: a platform for investigating biology.</title>
        <authorList>
            <consortium name="The C. elegans sequencing consortium"/>
        </authorList>
    </citation>
    <scope>NUCLEOTIDE SEQUENCE [LARGE SCALE GENOMIC DNA]</scope>
    <source>
        <strain>Bristol N2</strain>
    </source>
</reference>
<reference key="2">
    <citation type="journal article" date="2011" name="J. Toxicol.">
        <title>Sulfurous gases as biological messengers and toxins: comparative genetics of their metabolism in model organisms.</title>
        <authorList>
            <person name="Mathew N.D."/>
            <person name="Schlipalius D.I."/>
            <person name="Ebert P.R."/>
        </authorList>
    </citation>
    <scope>IDENTIFICATION</scope>
</reference>
<reference key="3">
    <citation type="journal article" date="2014" name="Antioxid. Redox Signal.">
        <title>Hydrogen sulfide is an endogenous regulator of aging in Caenorhabditis elegans.</title>
        <authorList>
            <person name="Qabazard B."/>
            <person name="Li L."/>
            <person name="Gruber J."/>
            <person name="Peh M.T."/>
            <person name="Ng L.F."/>
            <person name="Kumar S.D."/>
            <person name="Rose P."/>
            <person name="Tan C.H."/>
            <person name="Dymock B.W."/>
            <person name="Wei F."/>
            <person name="Swain S.C."/>
            <person name="Halliwell B."/>
            <person name="Sturzenbaum S.R."/>
            <person name="Moore P.K."/>
        </authorList>
    </citation>
    <scope>INDUCTION</scope>
</reference>
<accession>P91247</accession>
<sequence length="277" mass="30699">MAVDMIVEPKWVVQNFGNIRILDASWTFKPKADVAEYKAKYYNKFGVGMNELKNPEYLAEHINGAAHFNFDIAYYPSEDERFTLYTPEEFSSYVKRLGVFNGDHLVIYGRGKDGGMAAASRAYWTFRYYGYTTVSVLNGGIEAFKLAQGVVQSDSKAEGIRCKDAIHFPIGEVCAAKGFKKKTDCDQAFAAKGIKVGDTVVISCGIGLSASAICLAAARSGIVAKLYNGGVHELAYKAPQHLNMRVTLLLHAITVLRCTYIHFTFLYAIVIKIERIV</sequence>
<proteinExistence type="evidence at transcript level"/>
<gene>
    <name evidence="4" type="primary">mpst-4</name>
    <name evidence="4" type="ORF">F11G11.9</name>
</gene>
<keyword id="KW-1185">Reference proteome</keyword>
<keyword id="KW-0677">Repeat</keyword>
<keyword id="KW-0808">Transferase</keyword>
<dbReference type="EC" id="2.8.1.1" evidence="1"/>
<dbReference type="EMBL" id="FO081119">
    <property type="protein sequence ID" value="CCD69260.1"/>
    <property type="molecule type" value="Genomic_DNA"/>
</dbReference>
<dbReference type="PIR" id="T29979">
    <property type="entry name" value="T29979"/>
</dbReference>
<dbReference type="RefSeq" id="NP_001309500.1">
    <property type="nucleotide sequence ID" value="NM_001322727.1"/>
</dbReference>
<dbReference type="SMR" id="P91247"/>
<dbReference type="FunCoup" id="P91247">
    <property type="interactions" value="746"/>
</dbReference>
<dbReference type="STRING" id="6239.Y59H11AM.2.1"/>
<dbReference type="PaxDb" id="6239-F11G11.9"/>
<dbReference type="PeptideAtlas" id="P91247"/>
<dbReference type="EnsemblMetazoa" id="F11G11.9.1">
    <property type="protein sequence ID" value="F11G11.9.1"/>
    <property type="gene ID" value="WBGene00017387"/>
</dbReference>
<dbReference type="GeneID" id="173838"/>
<dbReference type="KEGG" id="cel:CELE_F11G11.9"/>
<dbReference type="UCSC" id="F11G11.9">
    <property type="organism name" value="c. elegans"/>
</dbReference>
<dbReference type="AGR" id="WB:WBGene00017387"/>
<dbReference type="CTD" id="173838"/>
<dbReference type="WormBase" id="F11G11.9">
    <property type="protein sequence ID" value="CE51449"/>
    <property type="gene ID" value="WBGene00017387"/>
    <property type="gene designation" value="mpst-4"/>
</dbReference>
<dbReference type="eggNOG" id="KOG1529">
    <property type="taxonomic scope" value="Eukaryota"/>
</dbReference>
<dbReference type="GeneTree" id="ENSGT00510000046773"/>
<dbReference type="HOGENOM" id="CLU_076711_0_0_1"/>
<dbReference type="InParanoid" id="P91247"/>
<dbReference type="OrthoDB" id="270167at2759"/>
<dbReference type="PhylomeDB" id="P91247"/>
<dbReference type="Reactome" id="R-CEL-1614558">
    <property type="pathway name" value="Degradation of cysteine and homocysteine"/>
</dbReference>
<dbReference type="PRO" id="PR:P91247"/>
<dbReference type="Proteomes" id="UP000001940">
    <property type="component" value="Chromosome II"/>
</dbReference>
<dbReference type="Bgee" id="WBGene00017387">
    <property type="expression patterns" value="Expressed in material anatomical entity and 2 other cell types or tissues"/>
</dbReference>
<dbReference type="GO" id="GO:0005739">
    <property type="term" value="C:mitochondrion"/>
    <property type="evidence" value="ECO:0000318"/>
    <property type="project" value="GO_Central"/>
</dbReference>
<dbReference type="GO" id="GO:0016784">
    <property type="term" value="F:3-mercaptopyruvate sulfurtransferase activity"/>
    <property type="evidence" value="ECO:0000318"/>
    <property type="project" value="GO_Central"/>
</dbReference>
<dbReference type="GO" id="GO:0004792">
    <property type="term" value="F:thiosulfate-cyanide sulfurtransferase activity"/>
    <property type="evidence" value="ECO:0000318"/>
    <property type="project" value="GO_Central"/>
</dbReference>
<dbReference type="CDD" id="cd01448">
    <property type="entry name" value="TST_Repeat_1"/>
    <property type="match status" value="1"/>
</dbReference>
<dbReference type="FunFam" id="3.40.250.10:FF:000058">
    <property type="entry name" value="MercaptoPyruvate SulfurTransferase homolog"/>
    <property type="match status" value="1"/>
</dbReference>
<dbReference type="Gene3D" id="3.40.250.10">
    <property type="entry name" value="Rhodanese-like domain"/>
    <property type="match status" value="2"/>
</dbReference>
<dbReference type="InterPro" id="IPR001763">
    <property type="entry name" value="Rhodanese-like_dom"/>
</dbReference>
<dbReference type="InterPro" id="IPR036873">
    <property type="entry name" value="Rhodanese-like_dom_sf"/>
</dbReference>
<dbReference type="InterPro" id="IPR045078">
    <property type="entry name" value="TST/MPST-like"/>
</dbReference>
<dbReference type="PANTHER" id="PTHR11364:SF27">
    <property type="entry name" value="SULFURTRANSFERASE"/>
    <property type="match status" value="1"/>
</dbReference>
<dbReference type="PANTHER" id="PTHR11364">
    <property type="entry name" value="THIOSULFATE SULFERTANSFERASE"/>
    <property type="match status" value="1"/>
</dbReference>
<dbReference type="Pfam" id="PF00581">
    <property type="entry name" value="Rhodanese"/>
    <property type="match status" value="1"/>
</dbReference>
<dbReference type="SMART" id="SM00450">
    <property type="entry name" value="RHOD"/>
    <property type="match status" value="1"/>
</dbReference>
<dbReference type="SUPFAM" id="SSF52821">
    <property type="entry name" value="Rhodanese/Cell cycle control phosphatase"/>
    <property type="match status" value="2"/>
</dbReference>
<dbReference type="PROSITE" id="PS50206">
    <property type="entry name" value="RHODANESE_3"/>
    <property type="match status" value="2"/>
</dbReference>
<feature type="chain" id="PRO_0000139403" description="Putative thiosulfate sulfurtransferase mpst-4">
    <location>
        <begin position="1"/>
        <end position="277"/>
    </location>
</feature>
<feature type="domain" description="Rhodanese 1" evidence="2">
    <location>
        <begin position="15"/>
        <end position="153"/>
    </location>
</feature>
<feature type="domain" description="Rhodanese 2" evidence="2">
    <location>
        <begin position="155"/>
        <end position="243"/>
    </location>
</feature>
<feature type="active site" description="Cysteine persulfide intermediate" evidence="2">
    <location>
        <position position="204"/>
    </location>
</feature>
<name>THT1_CAEEL</name>